<accession>W6QRN8</accession>
<organism>
    <name type="scientific">Penicillium roqueforti (strain FM164)</name>
    <dbReference type="NCBI Taxonomy" id="1365484"/>
    <lineage>
        <taxon>Eukaryota</taxon>
        <taxon>Fungi</taxon>
        <taxon>Dikarya</taxon>
        <taxon>Ascomycota</taxon>
        <taxon>Pezizomycotina</taxon>
        <taxon>Eurotiomycetes</taxon>
        <taxon>Eurotiomycetidae</taxon>
        <taxon>Eurotiales</taxon>
        <taxon>Aspergillaceae</taxon>
        <taxon>Penicillium</taxon>
    </lineage>
</organism>
<keyword id="KW-0256">Endoplasmic reticulum</keyword>
<keyword id="KW-0349">Heme</keyword>
<keyword id="KW-0408">Iron</keyword>
<keyword id="KW-0472">Membrane</keyword>
<keyword id="KW-0479">Metal-binding</keyword>
<keyword id="KW-0503">Monooxygenase</keyword>
<keyword id="KW-0560">Oxidoreductase</keyword>
<keyword id="KW-1185">Reference proteome</keyword>
<keyword id="KW-0812">Transmembrane</keyword>
<keyword id="KW-1133">Transmembrane helix</keyword>
<name>MPADE_PENRF</name>
<comment type="function">
    <text evidence="4 7">Cytochrome P450 monooxygenase; part of the gene cluster that mediates the biosynthesis of mycophenolic acid (MPA), the first isolated antibiotic natural product in the world obtained from a culture of Penicillium brevicompactum in 1893 (PubMed:26751579). MpaDE is an endoplasmic reticulum-bound enzyme that catalyzes the conversion of 5-methylorsellinic acid (5MOA) into the phthalide compound 5,7-dihydroxy-4,6-dimethylphthalide (DHMP) (PubMed:26751579). MpaDE first catalyzes hydroxylation of 5-MOA to 4,6-dihydroxy-2-(hydroxymethyl)-3-methylbenzoic acid (DHMB), and then acts as a lactone synthase that catalyzes the ring closure to convert DHMB into DHMP (PubMed:26751579). The first step of the pathway is the synthesis of 5-methylorsellinic acid (5MOA) by the cytosolic polyketide synthase mpaC. 5MOA is then converted to the phthalide compound 5,7-dihydroxy-4,6-dimethylphthalide (DHMP) by the endoplasmic reticulum-bound cytochrome P450 monooxygenase mpaDE. MpaDE first catalyzes hydroxylation of 5-MOA to 4,6-dihydroxy-2-(hydroxymethyl)-3-methylbenzoic acid (DHMB). MpaDE then acts as a lactone synthase that catalyzes the ring closure to convert DHMB into DHMP. The next step is the prenylation of DHMP by the Golgi apparatus-associated prenyltransferase mpaA to yield farnesyl-DHMP (FDHMP). The ER-bound oxygenase mpaB then mediates the oxidative cleavage the C19-C20 double bond in FDHMP to yield FDHMP-3C via a mycophenolic aldehyde intermediate. The O-methyltransferase mpaG catalyzes the methylation of FDHMP-3C to yield MFDHMP-3C. After the cytosolic methylation of FDHMP-3C, MFDHMP-3C enters into peroxisomes probably via free diffusion due to its low molecular weight. Upon a peroxisomal CoA ligation reaction, catalyzed by a beta-oxidation component enzyme acyl-CoA ligase ACL891, MFDHMP-3C-CoA would then be restricted to peroxisomes for the following beta-oxidation pathway steps. The peroxisomal beta-oxidation machinery than converts MFDHMP-3C-CoA into MPA_CoA, via a beta-oxidation chain-shortening process. Finally mpaH acts as a peroxisomal acyl-CoA hydrolase with high substrate specificity toward MPA-CoA to release the final product MPA (Probable) (PubMed:26751579).</text>
</comment>
<comment type="catalytic activity">
    <reaction evidence="7">
        <text>5-methylorsellinate + reduced [NADPH--hemoprotein reductase] + O2 = 4,6-dihydroxy-2-(hydroxymethyl)-3-methylbenzoate + oxidized [NADPH--hemoprotein reductase] + H2O + H(+)</text>
        <dbReference type="Rhea" id="RHEA:66668"/>
        <dbReference type="Rhea" id="RHEA-COMP:11964"/>
        <dbReference type="Rhea" id="RHEA-COMP:11965"/>
        <dbReference type="ChEBI" id="CHEBI:15377"/>
        <dbReference type="ChEBI" id="CHEBI:15378"/>
        <dbReference type="ChEBI" id="CHEBI:15379"/>
        <dbReference type="ChEBI" id="CHEBI:57618"/>
        <dbReference type="ChEBI" id="CHEBI:58210"/>
        <dbReference type="ChEBI" id="CHEBI:146172"/>
        <dbReference type="ChEBI" id="CHEBI:167385"/>
    </reaction>
    <physiologicalReaction direction="left-to-right" evidence="7">
        <dbReference type="Rhea" id="RHEA:66669"/>
    </physiologicalReaction>
</comment>
<comment type="catalytic activity">
    <reaction evidence="7">
        <text>4,6-dihydroxy-2-(hydroxymethyl)-3-methylbenzoate + H(+) = 5,7-dihydroxy-4-methylphthalide + H2O</text>
        <dbReference type="Rhea" id="RHEA:66672"/>
        <dbReference type="ChEBI" id="CHEBI:15377"/>
        <dbReference type="ChEBI" id="CHEBI:15378"/>
        <dbReference type="ChEBI" id="CHEBI:68194"/>
        <dbReference type="ChEBI" id="CHEBI:167385"/>
    </reaction>
    <physiologicalReaction direction="left-to-right" evidence="7">
        <dbReference type="Rhea" id="RHEA:66673"/>
    </physiologicalReaction>
</comment>
<comment type="cofactor">
    <cofactor evidence="2">
        <name>heme</name>
        <dbReference type="ChEBI" id="CHEBI:30413"/>
    </cofactor>
</comment>
<comment type="pathway">
    <text evidence="4">Secondary metabolite biosynthesis; terpenoid biosynthesis.</text>
</comment>
<comment type="subcellular location">
    <subcellularLocation>
        <location evidence="1">Endoplasmic reticulum membrane</location>
        <topology evidence="3">Single-pass membrane protein</topology>
    </subcellularLocation>
</comment>
<comment type="disruption phenotype">
    <text evidence="4">Results in dramatic reduction in MPA production and leads to the accumulation of 5-MOA.</text>
</comment>
<comment type="similarity">
    <text evidence="6">Belongs to the cytochrome P450 family.</text>
</comment>
<comment type="sequence caution" evidence="6">
    <conflict type="erroneous initiation">
        <sequence resource="EMBL-CDS" id="CDM36724"/>
    </conflict>
    <text>Truncated N-terminus.</text>
</comment>
<protein>
    <recommendedName>
        <fullName evidence="5">Cytochrome P450 monooxygenase mpaDE</fullName>
        <ecNumber evidence="7">1.-.-.-</ecNumber>
    </recommendedName>
    <alternativeName>
        <fullName evidence="5">Mycophenolic acid biosynthesis cluster fusion protein DE</fullName>
    </alternativeName>
</protein>
<gene>
    <name evidence="5" type="primary">mpaDE</name>
    <name type="ORF">PROQFM164_S05g000557</name>
</gene>
<evidence type="ECO:0000250" key="1">
    <source>
        <dbReference type="UniProtKB" id="A0A0B5KYT4"/>
    </source>
</evidence>
<evidence type="ECO:0000250" key="2">
    <source>
        <dbReference type="UniProtKB" id="P04798"/>
    </source>
</evidence>
<evidence type="ECO:0000255" key="3"/>
<evidence type="ECO:0000269" key="4">
    <source>
    </source>
</evidence>
<evidence type="ECO:0000303" key="5">
    <source>
    </source>
</evidence>
<evidence type="ECO:0000305" key="6"/>
<evidence type="ECO:0000305" key="7">
    <source>
    </source>
</evidence>
<proteinExistence type="inferred from homology"/>
<reference key="1">
    <citation type="journal article" date="2014" name="Nat. Commun.">
        <title>Multiple recent horizontal transfers of a large genomic region in cheese making fungi.</title>
        <authorList>
            <person name="Cheeseman K."/>
            <person name="Ropars J."/>
            <person name="Renault P."/>
            <person name="Dupont J."/>
            <person name="Gouzy J."/>
            <person name="Branca A."/>
            <person name="Abraham A.-L."/>
            <person name="Ceppi M."/>
            <person name="Conseiller E."/>
            <person name="Debuchy R."/>
            <person name="Malagnac F."/>
            <person name="Goarin A."/>
            <person name="Silar P."/>
            <person name="Lacoste S."/>
            <person name="Sallet E."/>
            <person name="Bensimon A."/>
            <person name="Giraud T."/>
            <person name="Brygoo Y."/>
        </authorList>
    </citation>
    <scope>NUCLEOTIDE SEQUENCE [LARGE SCALE GENOMIC DNA]</scope>
    <source>
        <strain>FM164</strain>
    </source>
</reference>
<reference key="2">
    <citation type="journal article" date="2016" name="PLoS ONE">
        <title>Identification and functional analysis of the mycophenolic acid gene cluster of Penicillium roqueforti.</title>
        <authorList>
            <person name="Del-Cid A."/>
            <person name="Gil-Duran C."/>
            <person name="Vaca I."/>
            <person name="Rojas-Aedo J.F."/>
            <person name="Garcia-Rico R.O."/>
            <person name="Levican G."/>
            <person name="Chavez R."/>
        </authorList>
    </citation>
    <scope>FUNCTION</scope>
    <scope>DISRUPTION PHENOTYPE</scope>
    <scope>PATHWAY</scope>
</reference>
<feature type="chain" id="PRO_0000449216" description="Cytochrome P450 monooxygenase mpaDE">
    <location>
        <begin position="1"/>
        <end position="852"/>
    </location>
</feature>
<feature type="topological domain" description="Lumenal" evidence="6">
    <location>
        <begin position="1"/>
        <end position="6"/>
    </location>
</feature>
<feature type="transmembrane region" description="Helical" evidence="3">
    <location>
        <begin position="7"/>
        <end position="29"/>
    </location>
</feature>
<feature type="topological domain" description="Cytoplasmic" evidence="6">
    <location>
        <begin position="30"/>
        <end position="852"/>
    </location>
</feature>
<feature type="binding site" description="axial binding residue" evidence="2">
    <location>
        <position position="448"/>
    </location>
    <ligand>
        <name>heme</name>
        <dbReference type="ChEBI" id="CHEBI:30413"/>
    </ligand>
    <ligandPart>
        <name>Fe</name>
        <dbReference type="ChEBI" id="CHEBI:18248"/>
    </ligandPart>
</feature>
<sequence length="852" mass="96209">MDYLIIIRITAVAVVLYLTRYVCCLYLHLQDVPGPLFAKFTNLQRVWWVKSGRAHEYHRRMHAVYGPAVRFGPNMVSISDPRTIPAIYPSRPGFPKSDFYRTQKPYTPNKGAMPAVFNSQDEDLHKRLRSPIAPLYSMTNVVKLESFVDQTLAVLLEQLDGRFLGSNDVPFDLGSWLQYFAFDSMGTLTFSRRYGFLEQGRDMNGILGEIWKFMKRVSVMGQIPWFDEFCNTNPFIALFRSPTGFGVLKVVDKFILQRLAPREKDEVSDEKDMLSQFLNIQASNPDVMPWAPRAWTFSNIMAGSDSTANVMRTIMYNLLVHRDTLSRLQDELLESESSNGLSRTCPSWEKVRDLPYLDACVLEALRLHPPFCLPFERVVPGGGLTVCETYLPAGTIVGISPYMANRDKETFGNDADEWRPERWLGLSHEDRKRLENSLLTFGAGRRTCLGKNIAILEIKKLIPVLLLNYDIQIVNPENYKTENAWFFKQTGLQAVIRKRAKMERGSSNKDKPTLPPVLNIPPSSSTVDVRVIDPGTLLDLRPDLFWQPELPGLRKVTAPTYCFLISVGTRHVLFDLGVRQDWERLPPSVVAMIKSQTTIQNPRNISDILDSDASSLGIRSTDIEAIIWSHAHFDHIGDPSTFPLSTELVVGPGIRDSHWPGFPTNPDAINLNSDIQGRKVREISFERTEKEAIKIGSFDALDYFGDGSFYLLNAAGHSIGHIGALARVTTSPDSFVFMGGDSCHHAGVLRPSKYLPCPSHSRHIPLSSESESVFTLSPVLPSDYDAALKTVDNIKELDAYDNVFLILAHDSTLKGNMDFYPLTINDWKAKGYGKQTKWLFYKDLEDAMEGTK</sequence>
<dbReference type="EC" id="1.-.-.-" evidence="7"/>
<dbReference type="EMBL" id="HG792019">
    <property type="protein sequence ID" value="CDM36724.1"/>
    <property type="status" value="ALT_INIT"/>
    <property type="molecule type" value="Genomic_DNA"/>
</dbReference>
<dbReference type="SMR" id="W6QRN8"/>
<dbReference type="STRING" id="1365484.W6QRN8"/>
<dbReference type="OrthoDB" id="3934656at2759"/>
<dbReference type="UniPathway" id="UPA00213"/>
<dbReference type="Proteomes" id="UP000030686">
    <property type="component" value="Unassembled WGS sequence"/>
</dbReference>
<dbReference type="GO" id="GO:0005789">
    <property type="term" value="C:endoplasmic reticulum membrane"/>
    <property type="evidence" value="ECO:0000250"/>
    <property type="project" value="GO_Central"/>
</dbReference>
<dbReference type="GO" id="GO:0020037">
    <property type="term" value="F:heme binding"/>
    <property type="evidence" value="ECO:0007669"/>
    <property type="project" value="InterPro"/>
</dbReference>
<dbReference type="GO" id="GO:0005506">
    <property type="term" value="F:iron ion binding"/>
    <property type="evidence" value="ECO:0007669"/>
    <property type="project" value="InterPro"/>
</dbReference>
<dbReference type="GO" id="GO:0004497">
    <property type="term" value="F:monooxygenase activity"/>
    <property type="evidence" value="ECO:0000315"/>
    <property type="project" value="GO_Central"/>
</dbReference>
<dbReference type="GO" id="GO:0016705">
    <property type="term" value="F:oxidoreductase activity, acting on paired donors, with incorporation or reduction of molecular oxygen"/>
    <property type="evidence" value="ECO:0007669"/>
    <property type="project" value="InterPro"/>
</dbReference>
<dbReference type="GO" id="GO:0140722">
    <property type="term" value="P:mycophenolic acid biosynthetic process"/>
    <property type="evidence" value="ECO:0000315"/>
    <property type="project" value="GO_Central"/>
</dbReference>
<dbReference type="GO" id="GO:0016114">
    <property type="term" value="P:terpenoid biosynthetic process"/>
    <property type="evidence" value="ECO:0007669"/>
    <property type="project" value="UniProtKB-UniPathway"/>
</dbReference>
<dbReference type="CDD" id="cd11060">
    <property type="entry name" value="CYP57A1-like"/>
    <property type="match status" value="1"/>
</dbReference>
<dbReference type="CDD" id="cd07730">
    <property type="entry name" value="metallo-hydrolase-like_MBL-fold"/>
    <property type="match status" value="1"/>
</dbReference>
<dbReference type="Gene3D" id="1.10.630.10">
    <property type="entry name" value="Cytochrome P450"/>
    <property type="match status" value="1"/>
</dbReference>
<dbReference type="Gene3D" id="3.60.15.10">
    <property type="entry name" value="Ribonuclease Z/Hydroxyacylglutathione hydrolase-like"/>
    <property type="match status" value="1"/>
</dbReference>
<dbReference type="InterPro" id="IPR001128">
    <property type="entry name" value="Cyt_P450"/>
</dbReference>
<dbReference type="InterPro" id="IPR017972">
    <property type="entry name" value="Cyt_P450_CS"/>
</dbReference>
<dbReference type="InterPro" id="IPR002403">
    <property type="entry name" value="Cyt_P450_E_grp-IV"/>
</dbReference>
<dbReference type="InterPro" id="IPR036396">
    <property type="entry name" value="Cyt_P450_sf"/>
</dbReference>
<dbReference type="InterPro" id="IPR050121">
    <property type="entry name" value="Cytochrome_P450_monoxygenase"/>
</dbReference>
<dbReference type="InterPro" id="IPR001279">
    <property type="entry name" value="Metallo-B-lactamas"/>
</dbReference>
<dbReference type="InterPro" id="IPR036866">
    <property type="entry name" value="RibonucZ/Hydroxyglut_hydro"/>
</dbReference>
<dbReference type="PANTHER" id="PTHR24305">
    <property type="entry name" value="CYTOCHROME P450"/>
    <property type="match status" value="1"/>
</dbReference>
<dbReference type="PANTHER" id="PTHR24305:SF175">
    <property type="entry name" value="CYTOCHROME P450 MONOOXYGENASE PKFB"/>
    <property type="match status" value="1"/>
</dbReference>
<dbReference type="Pfam" id="PF00753">
    <property type="entry name" value="Lactamase_B"/>
    <property type="match status" value="1"/>
</dbReference>
<dbReference type="Pfam" id="PF00067">
    <property type="entry name" value="p450"/>
    <property type="match status" value="1"/>
</dbReference>
<dbReference type="PRINTS" id="PR00465">
    <property type="entry name" value="EP450IV"/>
</dbReference>
<dbReference type="PRINTS" id="PR00385">
    <property type="entry name" value="P450"/>
</dbReference>
<dbReference type="SMART" id="SM00849">
    <property type="entry name" value="Lactamase_B"/>
    <property type="match status" value="1"/>
</dbReference>
<dbReference type="SUPFAM" id="SSF48264">
    <property type="entry name" value="Cytochrome P450"/>
    <property type="match status" value="1"/>
</dbReference>
<dbReference type="SUPFAM" id="SSF56281">
    <property type="entry name" value="Metallo-hydrolase/oxidoreductase"/>
    <property type="match status" value="1"/>
</dbReference>
<dbReference type="PROSITE" id="PS00086">
    <property type="entry name" value="CYTOCHROME_P450"/>
    <property type="match status" value="1"/>
</dbReference>